<sequence>MKTFSAKPHEVKRNWFVIDATDKVLGRVASEVALRLRGKHKPEFTPHVDTGDFIIVINAAKLRVTGAKTTDKKYYRHSGYPGGIYETTFGKMQQRFPGRALEKAVKGMLPKGPLGYAMIKKLKVYAEGSHPHEAQQPQVLEI</sequence>
<reference key="1">
    <citation type="journal article" date="2002" name="Nature">
        <title>Genome sequence of the plant pathogen Ralstonia solanacearum.</title>
        <authorList>
            <person name="Salanoubat M."/>
            <person name="Genin S."/>
            <person name="Artiguenave F."/>
            <person name="Gouzy J."/>
            <person name="Mangenot S."/>
            <person name="Arlat M."/>
            <person name="Billault A."/>
            <person name="Brottier P."/>
            <person name="Camus J.-C."/>
            <person name="Cattolico L."/>
            <person name="Chandler M."/>
            <person name="Choisne N."/>
            <person name="Claudel-Renard C."/>
            <person name="Cunnac S."/>
            <person name="Demange N."/>
            <person name="Gaspin C."/>
            <person name="Lavie M."/>
            <person name="Moisan A."/>
            <person name="Robert C."/>
            <person name="Saurin W."/>
            <person name="Schiex T."/>
            <person name="Siguier P."/>
            <person name="Thebault P."/>
            <person name="Whalen M."/>
            <person name="Wincker P."/>
            <person name="Levy M."/>
            <person name="Weissenbach J."/>
            <person name="Boucher C.A."/>
        </authorList>
    </citation>
    <scope>NUCLEOTIDE SEQUENCE [LARGE SCALE GENOMIC DNA]</scope>
    <source>
        <strain>ATCC BAA-1114 / GMI1000</strain>
    </source>
</reference>
<name>RL13_RALN1</name>
<gene>
    <name evidence="1" type="primary">rplM</name>
    <name type="ordered locus">RSc0490</name>
</gene>
<keyword id="KW-1185">Reference proteome</keyword>
<keyword id="KW-0687">Ribonucleoprotein</keyword>
<keyword id="KW-0689">Ribosomal protein</keyword>
<comment type="function">
    <text evidence="1">This protein is one of the early assembly proteins of the 50S ribosomal subunit, although it is not seen to bind rRNA by itself. It is important during the early stages of 50S assembly.</text>
</comment>
<comment type="subunit">
    <text evidence="1">Part of the 50S ribosomal subunit.</text>
</comment>
<comment type="similarity">
    <text evidence="1">Belongs to the universal ribosomal protein uL13 family.</text>
</comment>
<protein>
    <recommendedName>
        <fullName evidence="1">Large ribosomal subunit protein uL13</fullName>
    </recommendedName>
    <alternativeName>
        <fullName evidence="2">50S ribosomal protein L13</fullName>
    </alternativeName>
</protein>
<accession>Q8Y246</accession>
<evidence type="ECO:0000255" key="1">
    <source>
        <dbReference type="HAMAP-Rule" id="MF_01366"/>
    </source>
</evidence>
<evidence type="ECO:0000305" key="2"/>
<dbReference type="EMBL" id="AL646052">
    <property type="protein sequence ID" value="CAD14018.1"/>
    <property type="molecule type" value="Genomic_DNA"/>
</dbReference>
<dbReference type="RefSeq" id="WP_003265480.1">
    <property type="nucleotide sequence ID" value="NC_003295.1"/>
</dbReference>
<dbReference type="SMR" id="Q8Y246"/>
<dbReference type="STRING" id="267608.RSc0490"/>
<dbReference type="EnsemblBacteria" id="CAD14018">
    <property type="protein sequence ID" value="CAD14018"/>
    <property type="gene ID" value="RSc0490"/>
</dbReference>
<dbReference type="GeneID" id="97322259"/>
<dbReference type="KEGG" id="rso:RSc0490"/>
<dbReference type="eggNOG" id="COG0102">
    <property type="taxonomic scope" value="Bacteria"/>
</dbReference>
<dbReference type="HOGENOM" id="CLU_082184_2_2_4"/>
<dbReference type="Proteomes" id="UP000001436">
    <property type="component" value="Chromosome"/>
</dbReference>
<dbReference type="GO" id="GO:0022625">
    <property type="term" value="C:cytosolic large ribosomal subunit"/>
    <property type="evidence" value="ECO:0007669"/>
    <property type="project" value="TreeGrafter"/>
</dbReference>
<dbReference type="GO" id="GO:0003729">
    <property type="term" value="F:mRNA binding"/>
    <property type="evidence" value="ECO:0007669"/>
    <property type="project" value="TreeGrafter"/>
</dbReference>
<dbReference type="GO" id="GO:0003735">
    <property type="term" value="F:structural constituent of ribosome"/>
    <property type="evidence" value="ECO:0007669"/>
    <property type="project" value="InterPro"/>
</dbReference>
<dbReference type="GO" id="GO:0017148">
    <property type="term" value="P:negative regulation of translation"/>
    <property type="evidence" value="ECO:0007669"/>
    <property type="project" value="TreeGrafter"/>
</dbReference>
<dbReference type="GO" id="GO:0006412">
    <property type="term" value="P:translation"/>
    <property type="evidence" value="ECO:0007669"/>
    <property type="project" value="UniProtKB-UniRule"/>
</dbReference>
<dbReference type="CDD" id="cd00392">
    <property type="entry name" value="Ribosomal_L13"/>
    <property type="match status" value="1"/>
</dbReference>
<dbReference type="FunFam" id="3.90.1180.10:FF:000001">
    <property type="entry name" value="50S ribosomal protein L13"/>
    <property type="match status" value="1"/>
</dbReference>
<dbReference type="Gene3D" id="3.90.1180.10">
    <property type="entry name" value="Ribosomal protein L13"/>
    <property type="match status" value="1"/>
</dbReference>
<dbReference type="HAMAP" id="MF_01366">
    <property type="entry name" value="Ribosomal_uL13"/>
    <property type="match status" value="1"/>
</dbReference>
<dbReference type="InterPro" id="IPR005822">
    <property type="entry name" value="Ribosomal_uL13"/>
</dbReference>
<dbReference type="InterPro" id="IPR005823">
    <property type="entry name" value="Ribosomal_uL13_bac-type"/>
</dbReference>
<dbReference type="InterPro" id="IPR036899">
    <property type="entry name" value="Ribosomal_uL13_sf"/>
</dbReference>
<dbReference type="NCBIfam" id="TIGR01066">
    <property type="entry name" value="rplM_bact"/>
    <property type="match status" value="1"/>
</dbReference>
<dbReference type="PANTHER" id="PTHR11545:SF2">
    <property type="entry name" value="LARGE RIBOSOMAL SUBUNIT PROTEIN UL13M"/>
    <property type="match status" value="1"/>
</dbReference>
<dbReference type="PANTHER" id="PTHR11545">
    <property type="entry name" value="RIBOSOMAL PROTEIN L13"/>
    <property type="match status" value="1"/>
</dbReference>
<dbReference type="Pfam" id="PF00572">
    <property type="entry name" value="Ribosomal_L13"/>
    <property type="match status" value="1"/>
</dbReference>
<dbReference type="PIRSF" id="PIRSF002181">
    <property type="entry name" value="Ribosomal_L13"/>
    <property type="match status" value="1"/>
</dbReference>
<dbReference type="SUPFAM" id="SSF52161">
    <property type="entry name" value="Ribosomal protein L13"/>
    <property type="match status" value="1"/>
</dbReference>
<feature type="chain" id="PRO_0000261780" description="Large ribosomal subunit protein uL13">
    <location>
        <begin position="1"/>
        <end position="142"/>
    </location>
</feature>
<organism>
    <name type="scientific">Ralstonia nicotianae (strain ATCC BAA-1114 / GMI1000)</name>
    <name type="common">Ralstonia solanacearum</name>
    <dbReference type="NCBI Taxonomy" id="267608"/>
    <lineage>
        <taxon>Bacteria</taxon>
        <taxon>Pseudomonadati</taxon>
        <taxon>Pseudomonadota</taxon>
        <taxon>Betaproteobacteria</taxon>
        <taxon>Burkholderiales</taxon>
        <taxon>Burkholderiaceae</taxon>
        <taxon>Ralstonia</taxon>
        <taxon>Ralstonia solanacearum species complex</taxon>
    </lineage>
</organism>
<proteinExistence type="inferred from homology"/>